<dbReference type="EC" id="1.5.1.5" evidence="1"/>
<dbReference type="EC" id="3.5.4.9" evidence="1"/>
<dbReference type="EMBL" id="AE017198">
    <property type="protein sequence ID" value="AAS09318.1"/>
    <property type="molecule type" value="Genomic_DNA"/>
</dbReference>
<dbReference type="RefSeq" id="WP_004897065.1">
    <property type="nucleotide sequence ID" value="NC_005362.1"/>
</dbReference>
<dbReference type="SMR" id="Q74IM0"/>
<dbReference type="KEGG" id="ljo:LJ_1550"/>
<dbReference type="eggNOG" id="COG0190">
    <property type="taxonomic scope" value="Bacteria"/>
</dbReference>
<dbReference type="HOGENOM" id="CLU_034045_2_1_9"/>
<dbReference type="UniPathway" id="UPA00193"/>
<dbReference type="Proteomes" id="UP000000581">
    <property type="component" value="Chromosome"/>
</dbReference>
<dbReference type="GO" id="GO:0005829">
    <property type="term" value="C:cytosol"/>
    <property type="evidence" value="ECO:0007669"/>
    <property type="project" value="TreeGrafter"/>
</dbReference>
<dbReference type="GO" id="GO:0004477">
    <property type="term" value="F:methenyltetrahydrofolate cyclohydrolase activity"/>
    <property type="evidence" value="ECO:0007669"/>
    <property type="project" value="UniProtKB-UniRule"/>
</dbReference>
<dbReference type="GO" id="GO:0004488">
    <property type="term" value="F:methylenetetrahydrofolate dehydrogenase (NADP+) activity"/>
    <property type="evidence" value="ECO:0007669"/>
    <property type="project" value="UniProtKB-UniRule"/>
</dbReference>
<dbReference type="GO" id="GO:0000105">
    <property type="term" value="P:L-histidine biosynthetic process"/>
    <property type="evidence" value="ECO:0007669"/>
    <property type="project" value="UniProtKB-KW"/>
</dbReference>
<dbReference type="GO" id="GO:0009086">
    <property type="term" value="P:methionine biosynthetic process"/>
    <property type="evidence" value="ECO:0007669"/>
    <property type="project" value="UniProtKB-KW"/>
</dbReference>
<dbReference type="GO" id="GO:0006164">
    <property type="term" value="P:purine nucleotide biosynthetic process"/>
    <property type="evidence" value="ECO:0007669"/>
    <property type="project" value="UniProtKB-KW"/>
</dbReference>
<dbReference type="GO" id="GO:0035999">
    <property type="term" value="P:tetrahydrofolate interconversion"/>
    <property type="evidence" value="ECO:0007669"/>
    <property type="project" value="UniProtKB-UniRule"/>
</dbReference>
<dbReference type="CDD" id="cd01080">
    <property type="entry name" value="NAD_bind_m-THF_DH_Cyclohyd"/>
    <property type="match status" value="1"/>
</dbReference>
<dbReference type="FunFam" id="3.40.50.720:FF:000094">
    <property type="entry name" value="Bifunctional protein FolD"/>
    <property type="match status" value="1"/>
</dbReference>
<dbReference type="FunFam" id="3.40.50.10860:FF:000005">
    <property type="entry name" value="C-1-tetrahydrofolate synthase, cytoplasmic, putative"/>
    <property type="match status" value="1"/>
</dbReference>
<dbReference type="Gene3D" id="3.40.50.10860">
    <property type="entry name" value="Leucine Dehydrogenase, chain A, domain 1"/>
    <property type="match status" value="1"/>
</dbReference>
<dbReference type="Gene3D" id="3.40.50.720">
    <property type="entry name" value="NAD(P)-binding Rossmann-like Domain"/>
    <property type="match status" value="1"/>
</dbReference>
<dbReference type="HAMAP" id="MF_01576">
    <property type="entry name" value="THF_DHG_CYH"/>
    <property type="match status" value="1"/>
</dbReference>
<dbReference type="InterPro" id="IPR046346">
    <property type="entry name" value="Aminoacid_DH-like_N_sf"/>
</dbReference>
<dbReference type="InterPro" id="IPR036291">
    <property type="entry name" value="NAD(P)-bd_dom_sf"/>
</dbReference>
<dbReference type="InterPro" id="IPR000672">
    <property type="entry name" value="THF_DH/CycHdrlase"/>
</dbReference>
<dbReference type="InterPro" id="IPR020630">
    <property type="entry name" value="THF_DH/CycHdrlase_cat_dom"/>
</dbReference>
<dbReference type="InterPro" id="IPR020867">
    <property type="entry name" value="THF_DH/CycHdrlase_CS"/>
</dbReference>
<dbReference type="InterPro" id="IPR020631">
    <property type="entry name" value="THF_DH/CycHdrlase_NAD-bd_dom"/>
</dbReference>
<dbReference type="PANTHER" id="PTHR48099:SF5">
    <property type="entry name" value="C-1-TETRAHYDROFOLATE SYNTHASE, CYTOPLASMIC"/>
    <property type="match status" value="1"/>
</dbReference>
<dbReference type="PANTHER" id="PTHR48099">
    <property type="entry name" value="C-1-TETRAHYDROFOLATE SYNTHASE, CYTOPLASMIC-RELATED"/>
    <property type="match status" value="1"/>
</dbReference>
<dbReference type="Pfam" id="PF00763">
    <property type="entry name" value="THF_DHG_CYH"/>
    <property type="match status" value="1"/>
</dbReference>
<dbReference type="Pfam" id="PF02882">
    <property type="entry name" value="THF_DHG_CYH_C"/>
    <property type="match status" value="1"/>
</dbReference>
<dbReference type="PRINTS" id="PR00085">
    <property type="entry name" value="THFDHDRGNASE"/>
</dbReference>
<dbReference type="SUPFAM" id="SSF53223">
    <property type="entry name" value="Aminoacid dehydrogenase-like, N-terminal domain"/>
    <property type="match status" value="1"/>
</dbReference>
<dbReference type="SUPFAM" id="SSF51735">
    <property type="entry name" value="NAD(P)-binding Rossmann-fold domains"/>
    <property type="match status" value="1"/>
</dbReference>
<dbReference type="PROSITE" id="PS00766">
    <property type="entry name" value="THF_DHG_CYH_1"/>
    <property type="match status" value="1"/>
</dbReference>
<proteinExistence type="inferred from homology"/>
<comment type="function">
    <text evidence="1">Catalyzes the oxidation of 5,10-methylenetetrahydrofolate to 5,10-methenyltetrahydrofolate and then the hydrolysis of 5,10-methenyltetrahydrofolate to 10-formyltetrahydrofolate.</text>
</comment>
<comment type="catalytic activity">
    <reaction evidence="1">
        <text>(6R)-5,10-methylene-5,6,7,8-tetrahydrofolate + NADP(+) = (6R)-5,10-methenyltetrahydrofolate + NADPH</text>
        <dbReference type="Rhea" id="RHEA:22812"/>
        <dbReference type="ChEBI" id="CHEBI:15636"/>
        <dbReference type="ChEBI" id="CHEBI:57455"/>
        <dbReference type="ChEBI" id="CHEBI:57783"/>
        <dbReference type="ChEBI" id="CHEBI:58349"/>
        <dbReference type="EC" id="1.5.1.5"/>
    </reaction>
</comment>
<comment type="catalytic activity">
    <reaction evidence="1">
        <text>(6R)-5,10-methenyltetrahydrofolate + H2O = (6R)-10-formyltetrahydrofolate + H(+)</text>
        <dbReference type="Rhea" id="RHEA:23700"/>
        <dbReference type="ChEBI" id="CHEBI:15377"/>
        <dbReference type="ChEBI" id="CHEBI:15378"/>
        <dbReference type="ChEBI" id="CHEBI:57455"/>
        <dbReference type="ChEBI" id="CHEBI:195366"/>
        <dbReference type="EC" id="3.5.4.9"/>
    </reaction>
</comment>
<comment type="pathway">
    <text evidence="1">One-carbon metabolism; tetrahydrofolate interconversion.</text>
</comment>
<comment type="subunit">
    <text evidence="1">Homodimer.</text>
</comment>
<comment type="similarity">
    <text evidence="1">Belongs to the tetrahydrofolate dehydrogenase/cyclohydrolase family.</text>
</comment>
<protein>
    <recommendedName>
        <fullName evidence="1">Bifunctional protein FolD 2</fullName>
    </recommendedName>
    <domain>
        <recommendedName>
            <fullName evidence="1">Methylenetetrahydrofolate dehydrogenase</fullName>
            <ecNumber evidence="1">1.5.1.5</ecNumber>
        </recommendedName>
    </domain>
    <domain>
        <recommendedName>
            <fullName evidence="1">Methenyltetrahydrofolate cyclohydrolase</fullName>
            <ecNumber evidence="1">3.5.4.9</ecNumber>
        </recommendedName>
    </domain>
</protein>
<evidence type="ECO:0000255" key="1">
    <source>
        <dbReference type="HAMAP-Rule" id="MF_01576"/>
    </source>
</evidence>
<sequence>MKKLLEGKTPANEIKENLIEEIKKLKSDGINPTLCVIEVGDDPASKIYLRVKRNLAKKVGIKEIGLHFPANTSQAELLEKIEDLNQDPSINGIMVQLPVPPQIDPRAIFETIAPEKDADGFSPLNLGRLWEGQSDVIPATVRSILTLIDYYGIEMAGKNTVIIGRSVIVGKPLAAVLVERDATVTIAHSKTKNLSELTKNADVIISDVGKAHLVTEDMVKEGAVIIDVGMNRENGKLMGDVDFDMVAPKAKAITPVPGGVGPLTVASLMKQAVILTRKQHGR</sequence>
<keyword id="KW-0028">Amino-acid biosynthesis</keyword>
<keyword id="KW-0368">Histidine biosynthesis</keyword>
<keyword id="KW-0378">Hydrolase</keyword>
<keyword id="KW-0486">Methionine biosynthesis</keyword>
<keyword id="KW-0511">Multifunctional enzyme</keyword>
<keyword id="KW-0521">NADP</keyword>
<keyword id="KW-0554">One-carbon metabolism</keyword>
<keyword id="KW-0560">Oxidoreductase</keyword>
<keyword id="KW-0658">Purine biosynthesis</keyword>
<reference key="1">
    <citation type="journal article" date="2004" name="Proc. Natl. Acad. Sci. U.S.A.">
        <title>The genome sequence of the probiotic intestinal bacterium Lactobacillus johnsonii NCC 533.</title>
        <authorList>
            <person name="Pridmore R.D."/>
            <person name="Berger B."/>
            <person name="Desiere F."/>
            <person name="Vilanova D."/>
            <person name="Barretto C."/>
            <person name="Pittet A.-C."/>
            <person name="Zwahlen M.-C."/>
            <person name="Rouvet M."/>
            <person name="Altermann E."/>
            <person name="Barrangou R."/>
            <person name="Mollet B."/>
            <person name="Mercenier A."/>
            <person name="Klaenhammer T."/>
            <person name="Arigoni F."/>
            <person name="Schell M.A."/>
        </authorList>
    </citation>
    <scope>NUCLEOTIDE SEQUENCE [LARGE SCALE GENOMIC DNA]</scope>
    <source>
        <strain>CNCM I-1225 / La1 / NCC 533</strain>
    </source>
</reference>
<name>FOLD2_LACJO</name>
<gene>
    <name evidence="1" type="primary">folD2</name>
    <name type="ordered locus">LJ_1550</name>
</gene>
<organism>
    <name type="scientific">Lactobacillus johnsonii (strain CNCM I-12250 / La1 / NCC 533)</name>
    <dbReference type="NCBI Taxonomy" id="257314"/>
    <lineage>
        <taxon>Bacteria</taxon>
        <taxon>Bacillati</taxon>
        <taxon>Bacillota</taxon>
        <taxon>Bacilli</taxon>
        <taxon>Lactobacillales</taxon>
        <taxon>Lactobacillaceae</taxon>
        <taxon>Lactobacillus</taxon>
    </lineage>
</organism>
<accession>Q74IM0</accession>
<feature type="chain" id="PRO_0000268376" description="Bifunctional protein FolD 2">
    <location>
        <begin position="1"/>
        <end position="282"/>
    </location>
</feature>
<feature type="binding site" evidence="1">
    <location>
        <begin position="164"/>
        <end position="166"/>
    </location>
    <ligand>
        <name>NADP(+)</name>
        <dbReference type="ChEBI" id="CHEBI:58349"/>
    </ligand>
</feature>
<feature type="binding site" evidence="1">
    <location>
        <position position="189"/>
    </location>
    <ligand>
        <name>NADP(+)</name>
        <dbReference type="ChEBI" id="CHEBI:58349"/>
    </ligand>
</feature>